<evidence type="ECO:0000255" key="1">
    <source>
        <dbReference type="HAMAP-Rule" id="MF_01603"/>
    </source>
</evidence>
<feature type="chain" id="PRO_0000335556" description="Bifunctional protein HldE">
    <location>
        <begin position="1"/>
        <end position="475"/>
    </location>
</feature>
<feature type="region of interest" description="Ribokinase">
    <location>
        <begin position="1"/>
        <end position="320"/>
    </location>
</feature>
<feature type="region of interest" description="Cytidylyltransferase">
    <location>
        <begin position="346"/>
        <end position="475"/>
    </location>
</feature>
<feature type="active site" evidence="1">
    <location>
        <position position="265"/>
    </location>
</feature>
<feature type="binding site" evidence="1">
    <location>
        <begin position="196"/>
        <end position="199"/>
    </location>
    <ligand>
        <name>ATP</name>
        <dbReference type="ChEBI" id="CHEBI:30616"/>
    </ligand>
</feature>
<comment type="function">
    <text evidence="1">Catalyzes the phosphorylation of D-glycero-D-manno-heptose 7-phosphate at the C-1 position to selectively form D-glycero-beta-D-manno-heptose-1,7-bisphosphate.</text>
</comment>
<comment type="function">
    <text evidence="1">Catalyzes the ADP transfer from ATP to D-glycero-beta-D-manno-heptose 1-phosphate, yielding ADP-D-glycero-beta-D-manno-heptose.</text>
</comment>
<comment type="catalytic activity">
    <reaction evidence="1">
        <text>D-glycero-beta-D-manno-heptose 7-phosphate + ATP = D-glycero-beta-D-manno-heptose 1,7-bisphosphate + ADP + H(+)</text>
        <dbReference type="Rhea" id="RHEA:27473"/>
        <dbReference type="ChEBI" id="CHEBI:15378"/>
        <dbReference type="ChEBI" id="CHEBI:30616"/>
        <dbReference type="ChEBI" id="CHEBI:60204"/>
        <dbReference type="ChEBI" id="CHEBI:60208"/>
        <dbReference type="ChEBI" id="CHEBI:456216"/>
        <dbReference type="EC" id="2.7.1.167"/>
    </reaction>
</comment>
<comment type="catalytic activity">
    <reaction evidence="1">
        <text>D-glycero-beta-D-manno-heptose 1-phosphate + ATP + H(+) = ADP-D-glycero-beta-D-manno-heptose + diphosphate</text>
        <dbReference type="Rhea" id="RHEA:27465"/>
        <dbReference type="ChEBI" id="CHEBI:15378"/>
        <dbReference type="ChEBI" id="CHEBI:30616"/>
        <dbReference type="ChEBI" id="CHEBI:33019"/>
        <dbReference type="ChEBI" id="CHEBI:59967"/>
        <dbReference type="ChEBI" id="CHEBI:61593"/>
        <dbReference type="EC" id="2.7.7.70"/>
    </reaction>
</comment>
<comment type="pathway">
    <text evidence="1">Nucleotide-sugar biosynthesis; ADP-L-glycero-beta-D-manno-heptose biosynthesis; ADP-L-glycero-beta-D-manno-heptose from D-glycero-beta-D-manno-heptose 7-phosphate: step 1/4.</text>
</comment>
<comment type="pathway">
    <text evidence="1">Nucleotide-sugar biosynthesis; ADP-L-glycero-beta-D-manno-heptose biosynthesis; ADP-L-glycero-beta-D-manno-heptose from D-glycero-beta-D-manno-heptose 7-phosphate: step 3/4.</text>
</comment>
<comment type="subunit">
    <text evidence="1">Homodimer.</text>
</comment>
<comment type="similarity">
    <text evidence="1">In the N-terminal section; belongs to the carbohydrate kinase PfkB family.</text>
</comment>
<comment type="similarity">
    <text evidence="1">In the C-terminal section; belongs to the cytidylyltransferase family.</text>
</comment>
<gene>
    <name evidence="1" type="primary">hldE</name>
    <name type="ordered locus">Mmwyl1_3475</name>
</gene>
<organism>
    <name type="scientific">Marinomonas sp. (strain MWYL1)</name>
    <dbReference type="NCBI Taxonomy" id="400668"/>
    <lineage>
        <taxon>Bacteria</taxon>
        <taxon>Pseudomonadati</taxon>
        <taxon>Pseudomonadota</taxon>
        <taxon>Gammaproteobacteria</taxon>
        <taxon>Oceanospirillales</taxon>
        <taxon>Oceanospirillaceae</taxon>
        <taxon>Marinomonas</taxon>
    </lineage>
</organism>
<proteinExistence type="inferred from homology"/>
<sequence>MNSSYLNFKDKHILVVGDVMLDRYWHGGTSRISPEAPVQVVKVSSIEDRPGGAANVALGLAKLGVSVTLVGVVGNDENADVLARCLEDAGVICRFVRSETLPTITKLRVMSRHQQLIRLDFEEREDSLSQNEALAKVVEECLPKSDAVIFSDYAKGCLADVQSLIKLSNAAKVPSFVDPKGNDFSIYQGATLVKPNLLEFETIVGKCSSTKELEEKAKALREQFGWKALLVTRGEDGLILLSDDKPPFSLATAAKEVFDVTGAGDTVVAVLTAVYVTSKRFIDAVEYANQAAGYVVGKLGTASISAERLDAIMFQRSHNTNFGVLSPKDLLEQIKLAQMNGEKIVFTNGCFDILHPGHIAYMKQAKALGDRLIVAVNTDASVKRLKGEKRPINNLIHRMSVLEGVGSIDWVTWFDEDTPKEIIEFLTPDVLVKGGDYTIETIVGADHVLAHGGEVKVLTFVDGYSTTSIIEKANL</sequence>
<dbReference type="EC" id="2.7.1.167" evidence="1"/>
<dbReference type="EC" id="2.7.7.70" evidence="1"/>
<dbReference type="EMBL" id="CP000749">
    <property type="protein sequence ID" value="ABR72378.1"/>
    <property type="molecule type" value="Genomic_DNA"/>
</dbReference>
<dbReference type="SMR" id="A6W0Z9"/>
<dbReference type="STRING" id="400668.Mmwyl1_3475"/>
<dbReference type="KEGG" id="mmw:Mmwyl1_3475"/>
<dbReference type="eggNOG" id="COG0615">
    <property type="taxonomic scope" value="Bacteria"/>
</dbReference>
<dbReference type="eggNOG" id="COG2870">
    <property type="taxonomic scope" value="Bacteria"/>
</dbReference>
<dbReference type="HOGENOM" id="CLU_021150_2_1_6"/>
<dbReference type="OrthoDB" id="9802794at2"/>
<dbReference type="UniPathway" id="UPA00356">
    <property type="reaction ID" value="UER00437"/>
</dbReference>
<dbReference type="UniPathway" id="UPA00356">
    <property type="reaction ID" value="UER00439"/>
</dbReference>
<dbReference type="GO" id="GO:0005829">
    <property type="term" value="C:cytosol"/>
    <property type="evidence" value="ECO:0007669"/>
    <property type="project" value="TreeGrafter"/>
</dbReference>
<dbReference type="GO" id="GO:0005524">
    <property type="term" value="F:ATP binding"/>
    <property type="evidence" value="ECO:0007669"/>
    <property type="project" value="UniProtKB-UniRule"/>
</dbReference>
<dbReference type="GO" id="GO:0033785">
    <property type="term" value="F:heptose 7-phosphate kinase activity"/>
    <property type="evidence" value="ECO:0007669"/>
    <property type="project" value="UniProtKB-UniRule"/>
</dbReference>
<dbReference type="GO" id="GO:0033786">
    <property type="term" value="F:heptose-1-phosphate adenylyltransferase activity"/>
    <property type="evidence" value="ECO:0007669"/>
    <property type="project" value="UniProtKB-UniRule"/>
</dbReference>
<dbReference type="GO" id="GO:0016773">
    <property type="term" value="F:phosphotransferase activity, alcohol group as acceptor"/>
    <property type="evidence" value="ECO:0007669"/>
    <property type="project" value="InterPro"/>
</dbReference>
<dbReference type="GO" id="GO:0097171">
    <property type="term" value="P:ADP-L-glycero-beta-D-manno-heptose biosynthetic process"/>
    <property type="evidence" value="ECO:0007669"/>
    <property type="project" value="UniProtKB-UniPathway"/>
</dbReference>
<dbReference type="CDD" id="cd01172">
    <property type="entry name" value="RfaE_like"/>
    <property type="match status" value="1"/>
</dbReference>
<dbReference type="FunFam" id="3.40.1190.20:FF:000002">
    <property type="entry name" value="Bifunctional protein HldE"/>
    <property type="match status" value="1"/>
</dbReference>
<dbReference type="FunFam" id="3.40.50.620:FF:000028">
    <property type="entry name" value="Bifunctional protein HldE"/>
    <property type="match status" value="1"/>
</dbReference>
<dbReference type="Gene3D" id="3.40.1190.20">
    <property type="match status" value="1"/>
</dbReference>
<dbReference type="Gene3D" id="3.40.50.620">
    <property type="entry name" value="HUPs"/>
    <property type="match status" value="1"/>
</dbReference>
<dbReference type="HAMAP" id="MF_01603">
    <property type="entry name" value="HldE"/>
    <property type="match status" value="1"/>
</dbReference>
<dbReference type="InterPro" id="IPR023030">
    <property type="entry name" value="Bifunc_HldE"/>
</dbReference>
<dbReference type="InterPro" id="IPR002173">
    <property type="entry name" value="Carboh/pur_kinase_PfkB_CS"/>
</dbReference>
<dbReference type="InterPro" id="IPR004821">
    <property type="entry name" value="Cyt_trans-like"/>
</dbReference>
<dbReference type="InterPro" id="IPR011611">
    <property type="entry name" value="PfkB_dom"/>
</dbReference>
<dbReference type="InterPro" id="IPR011913">
    <property type="entry name" value="RfaE_dom_I"/>
</dbReference>
<dbReference type="InterPro" id="IPR011914">
    <property type="entry name" value="RfaE_dom_II"/>
</dbReference>
<dbReference type="InterPro" id="IPR029056">
    <property type="entry name" value="Ribokinase-like"/>
</dbReference>
<dbReference type="InterPro" id="IPR014729">
    <property type="entry name" value="Rossmann-like_a/b/a_fold"/>
</dbReference>
<dbReference type="NCBIfam" id="TIGR00125">
    <property type="entry name" value="cyt_tran_rel"/>
    <property type="match status" value="1"/>
</dbReference>
<dbReference type="NCBIfam" id="NF008454">
    <property type="entry name" value="PRK11316.1"/>
    <property type="match status" value="1"/>
</dbReference>
<dbReference type="NCBIfam" id="TIGR02198">
    <property type="entry name" value="rfaE_dom_I"/>
    <property type="match status" value="1"/>
</dbReference>
<dbReference type="NCBIfam" id="TIGR02199">
    <property type="entry name" value="rfaE_dom_II"/>
    <property type="match status" value="1"/>
</dbReference>
<dbReference type="PANTHER" id="PTHR46969">
    <property type="entry name" value="BIFUNCTIONAL PROTEIN HLDE"/>
    <property type="match status" value="1"/>
</dbReference>
<dbReference type="PANTHER" id="PTHR46969:SF1">
    <property type="entry name" value="BIFUNCTIONAL PROTEIN HLDE"/>
    <property type="match status" value="1"/>
</dbReference>
<dbReference type="Pfam" id="PF01467">
    <property type="entry name" value="CTP_transf_like"/>
    <property type="match status" value="1"/>
</dbReference>
<dbReference type="Pfam" id="PF00294">
    <property type="entry name" value="PfkB"/>
    <property type="match status" value="1"/>
</dbReference>
<dbReference type="SUPFAM" id="SSF52374">
    <property type="entry name" value="Nucleotidylyl transferase"/>
    <property type="match status" value="1"/>
</dbReference>
<dbReference type="SUPFAM" id="SSF53613">
    <property type="entry name" value="Ribokinase-like"/>
    <property type="match status" value="1"/>
</dbReference>
<dbReference type="PROSITE" id="PS00583">
    <property type="entry name" value="PFKB_KINASES_1"/>
    <property type="match status" value="1"/>
</dbReference>
<keyword id="KW-0067">ATP-binding</keyword>
<keyword id="KW-0119">Carbohydrate metabolism</keyword>
<keyword id="KW-0418">Kinase</keyword>
<keyword id="KW-0511">Multifunctional enzyme</keyword>
<keyword id="KW-0547">Nucleotide-binding</keyword>
<keyword id="KW-0548">Nucleotidyltransferase</keyword>
<keyword id="KW-0808">Transferase</keyword>
<reference key="1">
    <citation type="submission" date="2007-06" db="EMBL/GenBank/DDBJ databases">
        <title>Complete sequence of Marinomonas sp. MWYL1.</title>
        <authorList>
            <consortium name="US DOE Joint Genome Institute"/>
            <person name="Copeland A."/>
            <person name="Lucas S."/>
            <person name="Lapidus A."/>
            <person name="Barry K."/>
            <person name="Glavina del Rio T."/>
            <person name="Dalin E."/>
            <person name="Tice H."/>
            <person name="Pitluck S."/>
            <person name="Kiss H."/>
            <person name="Brettin T."/>
            <person name="Bruce D."/>
            <person name="Detter J.C."/>
            <person name="Han C."/>
            <person name="Schmutz J."/>
            <person name="Larimer F."/>
            <person name="Land M."/>
            <person name="Hauser L."/>
            <person name="Kyrpides N."/>
            <person name="Kim E."/>
            <person name="Johnston A.W.B."/>
            <person name="Todd J.D."/>
            <person name="Rogers R."/>
            <person name="Wexler M."/>
            <person name="Bond P.L."/>
            <person name="Li Y."/>
            <person name="Richardson P."/>
        </authorList>
    </citation>
    <scope>NUCLEOTIDE SEQUENCE [LARGE SCALE GENOMIC DNA]</scope>
    <source>
        <strain>MWYL1</strain>
    </source>
</reference>
<name>HLDE_MARMS</name>
<protein>
    <recommendedName>
        <fullName evidence="1">Bifunctional protein HldE</fullName>
    </recommendedName>
    <domain>
        <recommendedName>
            <fullName evidence="1">D-beta-D-heptose 7-phosphate kinase</fullName>
            <ecNumber evidence="1">2.7.1.167</ecNumber>
        </recommendedName>
        <alternativeName>
            <fullName evidence="1">D-beta-D-heptose 7-phosphotransferase</fullName>
        </alternativeName>
        <alternativeName>
            <fullName evidence="1">D-glycero-beta-D-manno-heptose-7-phosphate kinase</fullName>
        </alternativeName>
    </domain>
    <domain>
        <recommendedName>
            <fullName evidence="1">D-beta-D-heptose 1-phosphate adenylyltransferase</fullName>
            <ecNumber evidence="1">2.7.7.70</ecNumber>
        </recommendedName>
        <alternativeName>
            <fullName evidence="1">D-glycero-beta-D-manno-heptose 1-phosphate adenylyltransferase</fullName>
        </alternativeName>
    </domain>
</protein>
<accession>A6W0Z9</accession>